<accession>Q73FB7</accession>
<dbReference type="EC" id="6.1.1.16" evidence="1"/>
<dbReference type="EMBL" id="AE017194">
    <property type="protein sequence ID" value="AAS39025.1"/>
    <property type="molecule type" value="Genomic_DNA"/>
</dbReference>
<dbReference type="SMR" id="Q73FB7"/>
<dbReference type="KEGG" id="bca:BCE_0089"/>
<dbReference type="HOGENOM" id="CLU_013528_0_1_9"/>
<dbReference type="Proteomes" id="UP000002527">
    <property type="component" value="Chromosome"/>
</dbReference>
<dbReference type="GO" id="GO:0005829">
    <property type="term" value="C:cytosol"/>
    <property type="evidence" value="ECO:0007669"/>
    <property type="project" value="TreeGrafter"/>
</dbReference>
<dbReference type="GO" id="GO:0005524">
    <property type="term" value="F:ATP binding"/>
    <property type="evidence" value="ECO:0007669"/>
    <property type="project" value="UniProtKB-UniRule"/>
</dbReference>
<dbReference type="GO" id="GO:0004817">
    <property type="term" value="F:cysteine-tRNA ligase activity"/>
    <property type="evidence" value="ECO:0007669"/>
    <property type="project" value="UniProtKB-UniRule"/>
</dbReference>
<dbReference type="GO" id="GO:0008270">
    <property type="term" value="F:zinc ion binding"/>
    <property type="evidence" value="ECO:0007669"/>
    <property type="project" value="UniProtKB-UniRule"/>
</dbReference>
<dbReference type="GO" id="GO:0006423">
    <property type="term" value="P:cysteinyl-tRNA aminoacylation"/>
    <property type="evidence" value="ECO:0007669"/>
    <property type="project" value="UniProtKB-UniRule"/>
</dbReference>
<dbReference type="CDD" id="cd00672">
    <property type="entry name" value="CysRS_core"/>
    <property type="match status" value="1"/>
</dbReference>
<dbReference type="FunFam" id="1.20.120.1910:FF:000002">
    <property type="entry name" value="Cysteine--tRNA ligase"/>
    <property type="match status" value="1"/>
</dbReference>
<dbReference type="FunFam" id="3.40.50.620:FF:000009">
    <property type="entry name" value="Cysteine--tRNA ligase"/>
    <property type="match status" value="1"/>
</dbReference>
<dbReference type="Gene3D" id="1.20.120.1910">
    <property type="entry name" value="Cysteine-tRNA ligase, C-terminal anti-codon recognition domain"/>
    <property type="match status" value="1"/>
</dbReference>
<dbReference type="Gene3D" id="3.40.50.620">
    <property type="entry name" value="HUPs"/>
    <property type="match status" value="1"/>
</dbReference>
<dbReference type="HAMAP" id="MF_00041">
    <property type="entry name" value="Cys_tRNA_synth"/>
    <property type="match status" value="1"/>
</dbReference>
<dbReference type="InterPro" id="IPR015803">
    <property type="entry name" value="Cys-tRNA-ligase"/>
</dbReference>
<dbReference type="InterPro" id="IPR015273">
    <property type="entry name" value="Cys-tRNA-synt_Ia_DALR"/>
</dbReference>
<dbReference type="InterPro" id="IPR024909">
    <property type="entry name" value="Cys-tRNA/MSH_ligase"/>
</dbReference>
<dbReference type="InterPro" id="IPR014729">
    <property type="entry name" value="Rossmann-like_a/b/a_fold"/>
</dbReference>
<dbReference type="InterPro" id="IPR032678">
    <property type="entry name" value="tRNA-synt_1_cat_dom"/>
</dbReference>
<dbReference type="InterPro" id="IPR009080">
    <property type="entry name" value="tRNAsynth_Ia_anticodon-bd"/>
</dbReference>
<dbReference type="NCBIfam" id="TIGR00435">
    <property type="entry name" value="cysS"/>
    <property type="match status" value="1"/>
</dbReference>
<dbReference type="PANTHER" id="PTHR10890:SF3">
    <property type="entry name" value="CYSTEINE--TRNA LIGASE, CYTOPLASMIC"/>
    <property type="match status" value="1"/>
</dbReference>
<dbReference type="PANTHER" id="PTHR10890">
    <property type="entry name" value="CYSTEINYL-TRNA SYNTHETASE"/>
    <property type="match status" value="1"/>
</dbReference>
<dbReference type="Pfam" id="PF09190">
    <property type="entry name" value="DALR_2"/>
    <property type="match status" value="1"/>
</dbReference>
<dbReference type="Pfam" id="PF01406">
    <property type="entry name" value="tRNA-synt_1e"/>
    <property type="match status" value="1"/>
</dbReference>
<dbReference type="PRINTS" id="PR00983">
    <property type="entry name" value="TRNASYNTHCYS"/>
</dbReference>
<dbReference type="SMART" id="SM00840">
    <property type="entry name" value="DALR_2"/>
    <property type="match status" value="1"/>
</dbReference>
<dbReference type="SUPFAM" id="SSF47323">
    <property type="entry name" value="Anticodon-binding domain of a subclass of class I aminoacyl-tRNA synthetases"/>
    <property type="match status" value="1"/>
</dbReference>
<dbReference type="SUPFAM" id="SSF52374">
    <property type="entry name" value="Nucleotidylyl transferase"/>
    <property type="match status" value="1"/>
</dbReference>
<gene>
    <name evidence="1" type="primary">cysS</name>
    <name type="ordered locus">BCE_0089</name>
</gene>
<reference key="1">
    <citation type="journal article" date="2004" name="Nucleic Acids Res.">
        <title>The genome sequence of Bacillus cereus ATCC 10987 reveals metabolic adaptations and a large plasmid related to Bacillus anthracis pXO1.</title>
        <authorList>
            <person name="Rasko D.A."/>
            <person name="Ravel J."/>
            <person name="Oekstad O.A."/>
            <person name="Helgason E."/>
            <person name="Cer R.Z."/>
            <person name="Jiang L."/>
            <person name="Shores K.A."/>
            <person name="Fouts D.E."/>
            <person name="Tourasse N.J."/>
            <person name="Angiuoli S.V."/>
            <person name="Kolonay J.F."/>
            <person name="Nelson W.C."/>
            <person name="Kolstoe A.-B."/>
            <person name="Fraser C.M."/>
            <person name="Read T.D."/>
        </authorList>
    </citation>
    <scope>NUCLEOTIDE SEQUENCE [LARGE SCALE GENOMIC DNA]</scope>
    <source>
        <strain>ATCC 10987 / NRS 248</strain>
    </source>
</reference>
<name>SYC_BACC1</name>
<sequence>MTIHIYNTLTRQKEEFIPLEENKVKMYVCGPTVYNYIHIGNARPPMVFDTVRRYLEYKGYDVQYVSNFTDVDDKLIKAANELGEDVPTIADRFVEAYFEDVTALGCKHATVHPRVTENMDIIIEFIQELVNKGYAYESEGDVYFRTKEFEGYGKLSHQPIADLRHGARIEVGEKKQDPLDFALWKAAKEGEIFWESPWGQGRPGWHIECSAMARKYLGDTIDIHAGGQDLAFPHHENEIAQSEALTGKTFARYWMHNGYININNEKMSKSLGNFILVHDIIKQYDPQLIRFFMLSVHYRHPINFSEELLQSTNNGLERIKTAYGNLKHRMESSTDLTDHNEKWLADLEKFQTAFEEAMNDDFNTANAITELYNVANHANQYLLEEHTSTVVIQAYVKQLETLFDILGLELAQEELLDEEIEALIQKRIEARKNRDFALSDQIRDDLKDRNIILEDTAQGTRWKRG</sequence>
<evidence type="ECO:0000255" key="1">
    <source>
        <dbReference type="HAMAP-Rule" id="MF_00041"/>
    </source>
</evidence>
<feature type="chain" id="PRO_0000159344" description="Cysteine--tRNA ligase">
    <location>
        <begin position="1"/>
        <end position="465"/>
    </location>
</feature>
<feature type="short sequence motif" description="'HIGH' region">
    <location>
        <begin position="31"/>
        <end position="41"/>
    </location>
</feature>
<feature type="short sequence motif" description="'KMSKS' region">
    <location>
        <begin position="266"/>
        <end position="270"/>
    </location>
</feature>
<feature type="binding site" evidence="1">
    <location>
        <position position="29"/>
    </location>
    <ligand>
        <name>Zn(2+)</name>
        <dbReference type="ChEBI" id="CHEBI:29105"/>
    </ligand>
</feature>
<feature type="binding site" evidence="1">
    <location>
        <position position="209"/>
    </location>
    <ligand>
        <name>Zn(2+)</name>
        <dbReference type="ChEBI" id="CHEBI:29105"/>
    </ligand>
</feature>
<feature type="binding site" evidence="1">
    <location>
        <position position="234"/>
    </location>
    <ligand>
        <name>Zn(2+)</name>
        <dbReference type="ChEBI" id="CHEBI:29105"/>
    </ligand>
</feature>
<feature type="binding site" evidence="1">
    <location>
        <position position="238"/>
    </location>
    <ligand>
        <name>Zn(2+)</name>
        <dbReference type="ChEBI" id="CHEBI:29105"/>
    </ligand>
</feature>
<feature type="binding site" evidence="1">
    <location>
        <position position="269"/>
    </location>
    <ligand>
        <name>ATP</name>
        <dbReference type="ChEBI" id="CHEBI:30616"/>
    </ligand>
</feature>
<feature type="modified residue" description="Phosphoserine" evidence="1">
    <location>
        <position position="270"/>
    </location>
</feature>
<protein>
    <recommendedName>
        <fullName evidence="1">Cysteine--tRNA ligase</fullName>
        <ecNumber evidence="1">6.1.1.16</ecNumber>
    </recommendedName>
    <alternativeName>
        <fullName evidence="1">Cysteinyl-tRNA synthetase</fullName>
        <shortName evidence="1">CysRS</shortName>
    </alternativeName>
</protein>
<proteinExistence type="inferred from homology"/>
<keyword id="KW-0030">Aminoacyl-tRNA synthetase</keyword>
<keyword id="KW-0067">ATP-binding</keyword>
<keyword id="KW-0963">Cytoplasm</keyword>
<keyword id="KW-0436">Ligase</keyword>
<keyword id="KW-0479">Metal-binding</keyword>
<keyword id="KW-0547">Nucleotide-binding</keyword>
<keyword id="KW-0597">Phosphoprotein</keyword>
<keyword id="KW-0648">Protein biosynthesis</keyword>
<keyword id="KW-0862">Zinc</keyword>
<organism>
    <name type="scientific">Bacillus cereus (strain ATCC 10987 / NRS 248)</name>
    <dbReference type="NCBI Taxonomy" id="222523"/>
    <lineage>
        <taxon>Bacteria</taxon>
        <taxon>Bacillati</taxon>
        <taxon>Bacillota</taxon>
        <taxon>Bacilli</taxon>
        <taxon>Bacillales</taxon>
        <taxon>Bacillaceae</taxon>
        <taxon>Bacillus</taxon>
        <taxon>Bacillus cereus group</taxon>
    </lineage>
</organism>
<comment type="catalytic activity">
    <reaction evidence="1">
        <text>tRNA(Cys) + L-cysteine + ATP = L-cysteinyl-tRNA(Cys) + AMP + diphosphate</text>
        <dbReference type="Rhea" id="RHEA:17773"/>
        <dbReference type="Rhea" id="RHEA-COMP:9661"/>
        <dbReference type="Rhea" id="RHEA-COMP:9679"/>
        <dbReference type="ChEBI" id="CHEBI:30616"/>
        <dbReference type="ChEBI" id="CHEBI:33019"/>
        <dbReference type="ChEBI" id="CHEBI:35235"/>
        <dbReference type="ChEBI" id="CHEBI:78442"/>
        <dbReference type="ChEBI" id="CHEBI:78517"/>
        <dbReference type="ChEBI" id="CHEBI:456215"/>
        <dbReference type="EC" id="6.1.1.16"/>
    </reaction>
</comment>
<comment type="cofactor">
    <cofactor evidence="1">
        <name>Zn(2+)</name>
        <dbReference type="ChEBI" id="CHEBI:29105"/>
    </cofactor>
    <text evidence="1">Binds 1 zinc ion per subunit.</text>
</comment>
<comment type="subunit">
    <text evidence="1">Monomer.</text>
</comment>
<comment type="subcellular location">
    <subcellularLocation>
        <location evidence="1">Cytoplasm</location>
    </subcellularLocation>
</comment>
<comment type="similarity">
    <text evidence="1">Belongs to the class-I aminoacyl-tRNA synthetase family.</text>
</comment>